<keyword id="KW-1185">Reference proteome</keyword>
<keyword id="KW-0687">Ribonucleoprotein</keyword>
<keyword id="KW-0689">Ribosomal protein</keyword>
<keyword id="KW-0694">RNA-binding</keyword>
<keyword id="KW-0699">rRNA-binding</keyword>
<keyword id="KW-0820">tRNA-binding</keyword>
<sequence>MSRRHSAEKREVIPDAKFGDVILTKFMNSIMYDGKKSVAEAIVYDAFDIIEQKARTEPLGVFKQALENVAPAIEVRSRRVGGATYQVPVEVRMERRQALAIRWIITAARGRNDKTMVDRLSAELMDAANNRGNAVKKREDTHRMAEANRAFSHYRW</sequence>
<gene>
    <name evidence="1" type="primary">rpsG</name>
    <name type="ordered locus">Msil_0584</name>
</gene>
<name>RS7_METSB</name>
<evidence type="ECO:0000255" key="1">
    <source>
        <dbReference type="HAMAP-Rule" id="MF_00480"/>
    </source>
</evidence>
<evidence type="ECO:0000305" key="2"/>
<reference key="1">
    <citation type="journal article" date="2010" name="J. Bacteriol.">
        <title>Complete genome sequence of the aerobic facultative methanotroph Methylocella silvestris BL2.</title>
        <authorList>
            <person name="Chen Y."/>
            <person name="Crombie A."/>
            <person name="Rahman M.T."/>
            <person name="Dedysh S.N."/>
            <person name="Liesack W."/>
            <person name="Stott M.B."/>
            <person name="Alam M."/>
            <person name="Theisen A.R."/>
            <person name="Murrell J.C."/>
            <person name="Dunfield P.F."/>
        </authorList>
    </citation>
    <scope>NUCLEOTIDE SEQUENCE [LARGE SCALE GENOMIC DNA]</scope>
    <source>
        <strain>DSM 15510 / CIP 108128 / LMG 27833 / NCIMB 13906 / BL2</strain>
    </source>
</reference>
<feature type="chain" id="PRO_1000135612" description="Small ribosomal subunit protein uS7">
    <location>
        <begin position="1"/>
        <end position="156"/>
    </location>
</feature>
<organism>
    <name type="scientific">Methylocella silvestris (strain DSM 15510 / CIP 108128 / LMG 27833 / NCIMB 13906 / BL2)</name>
    <dbReference type="NCBI Taxonomy" id="395965"/>
    <lineage>
        <taxon>Bacteria</taxon>
        <taxon>Pseudomonadati</taxon>
        <taxon>Pseudomonadota</taxon>
        <taxon>Alphaproteobacteria</taxon>
        <taxon>Hyphomicrobiales</taxon>
        <taxon>Beijerinckiaceae</taxon>
        <taxon>Methylocella</taxon>
    </lineage>
</organism>
<dbReference type="EMBL" id="CP001280">
    <property type="protein sequence ID" value="ACK49556.1"/>
    <property type="molecule type" value="Genomic_DNA"/>
</dbReference>
<dbReference type="RefSeq" id="WP_012589626.1">
    <property type="nucleotide sequence ID" value="NC_011666.1"/>
</dbReference>
<dbReference type="SMR" id="B8ELG7"/>
<dbReference type="STRING" id="395965.Msil_0584"/>
<dbReference type="KEGG" id="msl:Msil_0584"/>
<dbReference type="eggNOG" id="COG0049">
    <property type="taxonomic scope" value="Bacteria"/>
</dbReference>
<dbReference type="HOGENOM" id="CLU_072226_1_1_5"/>
<dbReference type="OrthoDB" id="9807653at2"/>
<dbReference type="Proteomes" id="UP000002257">
    <property type="component" value="Chromosome"/>
</dbReference>
<dbReference type="GO" id="GO:0015935">
    <property type="term" value="C:small ribosomal subunit"/>
    <property type="evidence" value="ECO:0007669"/>
    <property type="project" value="InterPro"/>
</dbReference>
<dbReference type="GO" id="GO:0019843">
    <property type="term" value="F:rRNA binding"/>
    <property type="evidence" value="ECO:0007669"/>
    <property type="project" value="UniProtKB-UniRule"/>
</dbReference>
<dbReference type="GO" id="GO:0003735">
    <property type="term" value="F:structural constituent of ribosome"/>
    <property type="evidence" value="ECO:0007669"/>
    <property type="project" value="InterPro"/>
</dbReference>
<dbReference type="GO" id="GO:0000049">
    <property type="term" value="F:tRNA binding"/>
    <property type="evidence" value="ECO:0007669"/>
    <property type="project" value="UniProtKB-UniRule"/>
</dbReference>
<dbReference type="GO" id="GO:0006412">
    <property type="term" value="P:translation"/>
    <property type="evidence" value="ECO:0007669"/>
    <property type="project" value="UniProtKB-UniRule"/>
</dbReference>
<dbReference type="CDD" id="cd14869">
    <property type="entry name" value="uS7_Bacteria"/>
    <property type="match status" value="1"/>
</dbReference>
<dbReference type="FunFam" id="1.10.455.10:FF:000001">
    <property type="entry name" value="30S ribosomal protein S7"/>
    <property type="match status" value="1"/>
</dbReference>
<dbReference type="Gene3D" id="1.10.455.10">
    <property type="entry name" value="Ribosomal protein S7 domain"/>
    <property type="match status" value="1"/>
</dbReference>
<dbReference type="HAMAP" id="MF_00480_B">
    <property type="entry name" value="Ribosomal_uS7_B"/>
    <property type="match status" value="1"/>
</dbReference>
<dbReference type="InterPro" id="IPR000235">
    <property type="entry name" value="Ribosomal_uS7"/>
</dbReference>
<dbReference type="InterPro" id="IPR005717">
    <property type="entry name" value="Ribosomal_uS7_bac/org-type"/>
</dbReference>
<dbReference type="InterPro" id="IPR020606">
    <property type="entry name" value="Ribosomal_uS7_CS"/>
</dbReference>
<dbReference type="InterPro" id="IPR023798">
    <property type="entry name" value="Ribosomal_uS7_dom"/>
</dbReference>
<dbReference type="InterPro" id="IPR036823">
    <property type="entry name" value="Ribosomal_uS7_dom_sf"/>
</dbReference>
<dbReference type="NCBIfam" id="TIGR01029">
    <property type="entry name" value="rpsG_bact"/>
    <property type="match status" value="1"/>
</dbReference>
<dbReference type="PANTHER" id="PTHR11205">
    <property type="entry name" value="RIBOSOMAL PROTEIN S7"/>
    <property type="match status" value="1"/>
</dbReference>
<dbReference type="Pfam" id="PF00177">
    <property type="entry name" value="Ribosomal_S7"/>
    <property type="match status" value="1"/>
</dbReference>
<dbReference type="PIRSF" id="PIRSF002122">
    <property type="entry name" value="RPS7p_RPS7a_RPS5e_RPS7o"/>
    <property type="match status" value="1"/>
</dbReference>
<dbReference type="SUPFAM" id="SSF47973">
    <property type="entry name" value="Ribosomal protein S7"/>
    <property type="match status" value="1"/>
</dbReference>
<dbReference type="PROSITE" id="PS00052">
    <property type="entry name" value="RIBOSOMAL_S7"/>
    <property type="match status" value="1"/>
</dbReference>
<accession>B8ELG7</accession>
<protein>
    <recommendedName>
        <fullName evidence="1">Small ribosomal subunit protein uS7</fullName>
    </recommendedName>
    <alternativeName>
        <fullName evidence="2">30S ribosomal protein S7</fullName>
    </alternativeName>
</protein>
<proteinExistence type="inferred from homology"/>
<comment type="function">
    <text evidence="1">One of the primary rRNA binding proteins, it binds directly to 16S rRNA where it nucleates assembly of the head domain of the 30S subunit. Is located at the subunit interface close to the decoding center, probably blocks exit of the E-site tRNA.</text>
</comment>
<comment type="subunit">
    <text evidence="1">Part of the 30S ribosomal subunit. Contacts proteins S9 and S11.</text>
</comment>
<comment type="similarity">
    <text evidence="1">Belongs to the universal ribosomal protein uS7 family.</text>
</comment>